<keyword id="KW-0903">Direct protein sequencing</keyword>
<keyword id="KW-1185">Reference proteome</keyword>
<sequence length="25" mass="2688">ITAGFISSSANTVYVKKGDVMVFPR</sequence>
<evidence type="ECO:0000255" key="1"/>
<evidence type="ECO:0000269" key="2">
    <source ref="1"/>
</evidence>
<evidence type="ECO:0000303" key="3">
    <source ref="1"/>
</evidence>
<evidence type="ECO:0000305" key="4"/>
<organism>
    <name type="scientific">Populus euphratica</name>
    <name type="common">Euphrates poplar</name>
    <dbReference type="NCBI Taxonomy" id="75702"/>
    <lineage>
        <taxon>Eukaryota</taxon>
        <taxon>Viridiplantae</taxon>
        <taxon>Streptophyta</taxon>
        <taxon>Embryophyta</taxon>
        <taxon>Tracheophyta</taxon>
        <taxon>Spermatophyta</taxon>
        <taxon>Magnoliopsida</taxon>
        <taxon>eudicotyledons</taxon>
        <taxon>Gunneridae</taxon>
        <taxon>Pentapetalae</taxon>
        <taxon>rosids</taxon>
        <taxon>fabids</taxon>
        <taxon>Malpighiales</taxon>
        <taxon>Salicaceae</taxon>
        <taxon>Saliceae</taxon>
        <taxon>Populus</taxon>
    </lineage>
</organism>
<protein>
    <recommendedName>
        <fullName>Germin-like protein</fullName>
    </recommendedName>
</protein>
<reference evidence="4" key="1">
    <citation type="thesis" date="2006" institute="ICAT-FCUL" country="Portugal">
        <title>Molecular analysis of Populus euphratica Oliv. response of moderate heat stress.</title>
        <authorList>
            <person name="Ferreira S."/>
        </authorList>
    </citation>
    <scope>PROTEIN SEQUENCE</scope>
    <source>
        <tissue evidence="2">Leaf</tissue>
    </source>
</reference>
<dbReference type="Proteomes" id="UP000694918">
    <property type="component" value="Unplaced"/>
</dbReference>
<comment type="similarity">
    <text evidence="1">Belongs to the germin family.</text>
</comment>
<proteinExistence type="evidence at protein level"/>
<name>GLP1_POPEU</name>
<accession>P84978</accession>
<feature type="chain" id="PRO_0000304516" description="Germin-like protein">
    <location>
        <begin position="1" status="less than"/>
        <end position="25" status="greater than"/>
    </location>
</feature>
<feature type="non-consecutive residues" evidence="3">
    <location>
        <begin position="16"/>
        <end position="17"/>
    </location>
</feature>
<feature type="non-terminal residue" evidence="3">
    <location>
        <position position="1"/>
    </location>
</feature>
<feature type="non-terminal residue" evidence="3">
    <location>
        <position position="25"/>
    </location>
</feature>